<name>THIE_RUMCH</name>
<evidence type="ECO:0000255" key="1">
    <source>
        <dbReference type="HAMAP-Rule" id="MF_00097"/>
    </source>
</evidence>
<gene>
    <name evidence="1" type="primary">thiE</name>
    <name type="ordered locus">Ccel_1989</name>
</gene>
<keyword id="KW-0460">Magnesium</keyword>
<keyword id="KW-0479">Metal-binding</keyword>
<keyword id="KW-1185">Reference proteome</keyword>
<keyword id="KW-0784">Thiamine biosynthesis</keyword>
<keyword id="KW-0808">Transferase</keyword>
<proteinExistence type="inferred from homology"/>
<comment type="function">
    <text evidence="1">Condenses 4-methyl-5-(beta-hydroxyethyl)thiazole monophosphate (THZ-P) and 2-methyl-4-amino-5-hydroxymethyl pyrimidine pyrophosphate (HMP-PP) to form thiamine monophosphate (TMP).</text>
</comment>
<comment type="catalytic activity">
    <reaction evidence="1">
        <text>2-[(2R,5Z)-2-carboxy-4-methylthiazol-5(2H)-ylidene]ethyl phosphate + 4-amino-2-methyl-5-(diphosphooxymethyl)pyrimidine + 2 H(+) = thiamine phosphate + CO2 + diphosphate</text>
        <dbReference type="Rhea" id="RHEA:47844"/>
        <dbReference type="ChEBI" id="CHEBI:15378"/>
        <dbReference type="ChEBI" id="CHEBI:16526"/>
        <dbReference type="ChEBI" id="CHEBI:33019"/>
        <dbReference type="ChEBI" id="CHEBI:37575"/>
        <dbReference type="ChEBI" id="CHEBI:57841"/>
        <dbReference type="ChEBI" id="CHEBI:62899"/>
        <dbReference type="EC" id="2.5.1.3"/>
    </reaction>
</comment>
<comment type="catalytic activity">
    <reaction evidence="1">
        <text>2-(2-carboxy-4-methylthiazol-5-yl)ethyl phosphate + 4-amino-2-methyl-5-(diphosphooxymethyl)pyrimidine + 2 H(+) = thiamine phosphate + CO2 + diphosphate</text>
        <dbReference type="Rhea" id="RHEA:47848"/>
        <dbReference type="ChEBI" id="CHEBI:15378"/>
        <dbReference type="ChEBI" id="CHEBI:16526"/>
        <dbReference type="ChEBI" id="CHEBI:33019"/>
        <dbReference type="ChEBI" id="CHEBI:37575"/>
        <dbReference type="ChEBI" id="CHEBI:57841"/>
        <dbReference type="ChEBI" id="CHEBI:62890"/>
        <dbReference type="EC" id="2.5.1.3"/>
    </reaction>
</comment>
<comment type="catalytic activity">
    <reaction evidence="1">
        <text>4-methyl-5-(2-phosphooxyethyl)-thiazole + 4-amino-2-methyl-5-(diphosphooxymethyl)pyrimidine + H(+) = thiamine phosphate + diphosphate</text>
        <dbReference type="Rhea" id="RHEA:22328"/>
        <dbReference type="ChEBI" id="CHEBI:15378"/>
        <dbReference type="ChEBI" id="CHEBI:33019"/>
        <dbReference type="ChEBI" id="CHEBI:37575"/>
        <dbReference type="ChEBI" id="CHEBI:57841"/>
        <dbReference type="ChEBI" id="CHEBI:58296"/>
        <dbReference type="EC" id="2.5.1.3"/>
    </reaction>
</comment>
<comment type="cofactor">
    <cofactor evidence="1">
        <name>Mg(2+)</name>
        <dbReference type="ChEBI" id="CHEBI:18420"/>
    </cofactor>
    <text evidence="1">Binds 1 Mg(2+) ion per subunit.</text>
</comment>
<comment type="pathway">
    <text evidence="1">Cofactor biosynthesis; thiamine diphosphate biosynthesis; thiamine phosphate from 4-amino-2-methyl-5-diphosphomethylpyrimidine and 4-methyl-5-(2-phosphoethyl)-thiazole: step 1/1.</text>
</comment>
<comment type="similarity">
    <text evidence="1">Belongs to the thiamine-phosphate synthase family.</text>
</comment>
<feature type="chain" id="PRO_1000198076" description="Thiamine-phosphate synthase">
    <location>
        <begin position="1"/>
        <end position="210"/>
    </location>
</feature>
<feature type="binding site" evidence="1">
    <location>
        <begin position="39"/>
        <end position="43"/>
    </location>
    <ligand>
        <name>4-amino-2-methyl-5-(diphosphooxymethyl)pyrimidine</name>
        <dbReference type="ChEBI" id="CHEBI:57841"/>
    </ligand>
</feature>
<feature type="binding site" evidence="1">
    <location>
        <position position="71"/>
    </location>
    <ligand>
        <name>4-amino-2-methyl-5-(diphosphooxymethyl)pyrimidine</name>
        <dbReference type="ChEBI" id="CHEBI:57841"/>
    </ligand>
</feature>
<feature type="binding site" evidence="1">
    <location>
        <position position="72"/>
    </location>
    <ligand>
        <name>Mg(2+)</name>
        <dbReference type="ChEBI" id="CHEBI:18420"/>
    </ligand>
</feature>
<feature type="binding site" evidence="1">
    <location>
        <position position="91"/>
    </location>
    <ligand>
        <name>Mg(2+)</name>
        <dbReference type="ChEBI" id="CHEBI:18420"/>
    </ligand>
</feature>
<feature type="binding site" evidence="1">
    <location>
        <position position="110"/>
    </location>
    <ligand>
        <name>4-amino-2-methyl-5-(diphosphooxymethyl)pyrimidine</name>
        <dbReference type="ChEBI" id="CHEBI:57841"/>
    </ligand>
</feature>
<feature type="binding site" evidence="1">
    <location>
        <begin position="136"/>
        <end position="138"/>
    </location>
    <ligand>
        <name>2-[(2R,5Z)-2-carboxy-4-methylthiazol-5(2H)-ylidene]ethyl phosphate</name>
        <dbReference type="ChEBI" id="CHEBI:62899"/>
    </ligand>
</feature>
<feature type="binding site" evidence="1">
    <location>
        <position position="139"/>
    </location>
    <ligand>
        <name>4-amino-2-methyl-5-(diphosphooxymethyl)pyrimidine</name>
        <dbReference type="ChEBI" id="CHEBI:57841"/>
    </ligand>
</feature>
<feature type="binding site" evidence="1">
    <location>
        <position position="166"/>
    </location>
    <ligand>
        <name>2-[(2R,5Z)-2-carboxy-4-methylthiazol-5(2H)-ylidene]ethyl phosphate</name>
        <dbReference type="ChEBI" id="CHEBI:62899"/>
    </ligand>
</feature>
<feature type="binding site" evidence="1">
    <location>
        <begin position="186"/>
        <end position="187"/>
    </location>
    <ligand>
        <name>2-[(2R,5Z)-2-carboxy-4-methylthiazol-5(2H)-ylidene]ethyl phosphate</name>
        <dbReference type="ChEBI" id="CHEBI:62899"/>
    </ligand>
</feature>
<dbReference type="EC" id="2.5.1.3" evidence="1"/>
<dbReference type="EMBL" id="CP001348">
    <property type="protein sequence ID" value="ACL76337.1"/>
    <property type="molecule type" value="Genomic_DNA"/>
</dbReference>
<dbReference type="RefSeq" id="WP_015925441.1">
    <property type="nucleotide sequence ID" value="NC_011898.1"/>
</dbReference>
<dbReference type="SMR" id="B8I3J4"/>
<dbReference type="STRING" id="394503.Ccel_1989"/>
<dbReference type="KEGG" id="cce:Ccel_1989"/>
<dbReference type="eggNOG" id="COG0352">
    <property type="taxonomic scope" value="Bacteria"/>
</dbReference>
<dbReference type="HOGENOM" id="CLU_018272_3_2_9"/>
<dbReference type="OrthoDB" id="9812206at2"/>
<dbReference type="UniPathway" id="UPA00060">
    <property type="reaction ID" value="UER00141"/>
</dbReference>
<dbReference type="Proteomes" id="UP000001349">
    <property type="component" value="Chromosome"/>
</dbReference>
<dbReference type="GO" id="GO:0005737">
    <property type="term" value="C:cytoplasm"/>
    <property type="evidence" value="ECO:0007669"/>
    <property type="project" value="TreeGrafter"/>
</dbReference>
<dbReference type="GO" id="GO:0000287">
    <property type="term" value="F:magnesium ion binding"/>
    <property type="evidence" value="ECO:0007669"/>
    <property type="project" value="UniProtKB-UniRule"/>
</dbReference>
<dbReference type="GO" id="GO:0004789">
    <property type="term" value="F:thiamine-phosphate diphosphorylase activity"/>
    <property type="evidence" value="ECO:0007669"/>
    <property type="project" value="UniProtKB-UniRule"/>
</dbReference>
<dbReference type="GO" id="GO:0009228">
    <property type="term" value="P:thiamine biosynthetic process"/>
    <property type="evidence" value="ECO:0007669"/>
    <property type="project" value="UniProtKB-KW"/>
</dbReference>
<dbReference type="GO" id="GO:0009229">
    <property type="term" value="P:thiamine diphosphate biosynthetic process"/>
    <property type="evidence" value="ECO:0007669"/>
    <property type="project" value="UniProtKB-UniRule"/>
</dbReference>
<dbReference type="CDD" id="cd00564">
    <property type="entry name" value="TMP_TenI"/>
    <property type="match status" value="1"/>
</dbReference>
<dbReference type="FunFam" id="3.20.20.70:FF:000096">
    <property type="entry name" value="Thiamine-phosphate synthase"/>
    <property type="match status" value="1"/>
</dbReference>
<dbReference type="Gene3D" id="3.20.20.70">
    <property type="entry name" value="Aldolase class I"/>
    <property type="match status" value="1"/>
</dbReference>
<dbReference type="HAMAP" id="MF_00097">
    <property type="entry name" value="TMP_synthase"/>
    <property type="match status" value="1"/>
</dbReference>
<dbReference type="InterPro" id="IPR013785">
    <property type="entry name" value="Aldolase_TIM"/>
</dbReference>
<dbReference type="InterPro" id="IPR036206">
    <property type="entry name" value="ThiamineP_synth_sf"/>
</dbReference>
<dbReference type="InterPro" id="IPR022998">
    <property type="entry name" value="ThiamineP_synth_TenI"/>
</dbReference>
<dbReference type="InterPro" id="IPR034291">
    <property type="entry name" value="TMP_synthase"/>
</dbReference>
<dbReference type="NCBIfam" id="TIGR00693">
    <property type="entry name" value="thiE"/>
    <property type="match status" value="1"/>
</dbReference>
<dbReference type="PANTHER" id="PTHR20857:SF23">
    <property type="entry name" value="THIAMINE BIOSYNTHETIC BIFUNCTIONAL ENZYME"/>
    <property type="match status" value="1"/>
</dbReference>
<dbReference type="PANTHER" id="PTHR20857">
    <property type="entry name" value="THIAMINE-PHOSPHATE PYROPHOSPHORYLASE"/>
    <property type="match status" value="1"/>
</dbReference>
<dbReference type="Pfam" id="PF02581">
    <property type="entry name" value="TMP-TENI"/>
    <property type="match status" value="1"/>
</dbReference>
<dbReference type="SUPFAM" id="SSF51391">
    <property type="entry name" value="Thiamin phosphate synthase"/>
    <property type="match status" value="1"/>
</dbReference>
<sequence length="210" mass="22311">MKSKIDYTLYLVTDHQLMSTKTLEEAVEQAIAGGCTLVQLREKTASSRDFYQNAINVKTITDKYNVPLIINDRIDIALAVGADGVHVGQSDLPAAVVRKIIGNDKILGVSAGSVEKAIEAQKIGADYIGVGALFSTSTKTDAKAVSIETLMKIVREVSIPVVGIGGINAENAVQLKNTGIRGIAVVSAIISQKDIKSSAEKLLEIFVNKA</sequence>
<accession>B8I3J4</accession>
<protein>
    <recommendedName>
        <fullName evidence="1">Thiamine-phosphate synthase</fullName>
        <shortName evidence="1">TP synthase</shortName>
        <shortName evidence="1">TPS</shortName>
        <ecNumber evidence="1">2.5.1.3</ecNumber>
    </recommendedName>
    <alternativeName>
        <fullName evidence="1">Thiamine-phosphate pyrophosphorylase</fullName>
        <shortName evidence="1">TMP pyrophosphorylase</shortName>
        <shortName evidence="1">TMP-PPase</shortName>
    </alternativeName>
</protein>
<organism>
    <name type="scientific">Ruminiclostridium cellulolyticum (strain ATCC 35319 / DSM 5812 / JCM 6584 / H10)</name>
    <name type="common">Clostridium cellulolyticum</name>
    <dbReference type="NCBI Taxonomy" id="394503"/>
    <lineage>
        <taxon>Bacteria</taxon>
        <taxon>Bacillati</taxon>
        <taxon>Bacillota</taxon>
        <taxon>Clostridia</taxon>
        <taxon>Eubacteriales</taxon>
        <taxon>Oscillospiraceae</taxon>
        <taxon>Ruminiclostridium</taxon>
    </lineage>
</organism>
<reference key="1">
    <citation type="submission" date="2009-01" db="EMBL/GenBank/DDBJ databases">
        <title>Complete sequence of Clostridium cellulolyticum H10.</title>
        <authorList>
            <consortium name="US DOE Joint Genome Institute"/>
            <person name="Lucas S."/>
            <person name="Copeland A."/>
            <person name="Lapidus A."/>
            <person name="Glavina del Rio T."/>
            <person name="Dalin E."/>
            <person name="Tice H."/>
            <person name="Bruce D."/>
            <person name="Goodwin L."/>
            <person name="Pitluck S."/>
            <person name="Chertkov O."/>
            <person name="Saunders E."/>
            <person name="Brettin T."/>
            <person name="Detter J.C."/>
            <person name="Han C."/>
            <person name="Larimer F."/>
            <person name="Land M."/>
            <person name="Hauser L."/>
            <person name="Kyrpides N."/>
            <person name="Ivanova N."/>
            <person name="Zhou J."/>
            <person name="Richardson P."/>
        </authorList>
    </citation>
    <scope>NUCLEOTIDE SEQUENCE [LARGE SCALE GENOMIC DNA]</scope>
    <source>
        <strain>ATCC 35319 / DSM 5812 / JCM 6584 / H10</strain>
    </source>
</reference>